<proteinExistence type="inferred from homology"/>
<reference key="1">
    <citation type="journal article" date="1998" name="J. Mol. Evol.">
        <title>Conflict among individual mitochondrial proteins in resolving the phylogeny of eutherian orders.</title>
        <authorList>
            <person name="Cao Y."/>
            <person name="Janke A."/>
            <person name="Waddell P.J."/>
            <person name="Westerman M."/>
            <person name="Takenaka O."/>
            <person name="Murata S."/>
            <person name="Okada N."/>
            <person name="Paeaebo S."/>
            <person name="Hasegawa M."/>
        </authorList>
    </citation>
    <scope>NUCLEOTIDE SEQUENCE [GENOMIC DNA]</scope>
    <source>
        <tissue>Liver</tissue>
    </source>
</reference>
<accession>O78710</accession>
<name>NU1M_PERGU</name>
<gene>
    <name type="primary">MT-ND1</name>
    <name type="synonym">MTND1</name>
    <name type="synonym">NADH1</name>
    <name type="synonym">ND1</name>
</gene>
<evidence type="ECO:0000250" key="1">
    <source>
        <dbReference type="UniProtKB" id="P03886"/>
    </source>
</evidence>
<evidence type="ECO:0000250" key="2">
    <source>
        <dbReference type="UniProtKB" id="P03887"/>
    </source>
</evidence>
<evidence type="ECO:0000255" key="3"/>
<evidence type="ECO:0000305" key="4"/>
<geneLocation type="mitochondrion"/>
<comment type="function">
    <text evidence="1">Core subunit of the mitochondrial membrane respiratory chain NADH dehydrogenase (Complex I) which catalyzes electron transfer from NADH through the respiratory chain, using ubiquinone as an electron acceptor. Essential for the catalytic activity and assembly of complex I.</text>
</comment>
<comment type="catalytic activity">
    <reaction evidence="1">
        <text>a ubiquinone + NADH + 5 H(+)(in) = a ubiquinol + NAD(+) + 4 H(+)(out)</text>
        <dbReference type="Rhea" id="RHEA:29091"/>
        <dbReference type="Rhea" id="RHEA-COMP:9565"/>
        <dbReference type="Rhea" id="RHEA-COMP:9566"/>
        <dbReference type="ChEBI" id="CHEBI:15378"/>
        <dbReference type="ChEBI" id="CHEBI:16389"/>
        <dbReference type="ChEBI" id="CHEBI:17976"/>
        <dbReference type="ChEBI" id="CHEBI:57540"/>
        <dbReference type="ChEBI" id="CHEBI:57945"/>
        <dbReference type="EC" id="7.1.1.2"/>
    </reaction>
</comment>
<comment type="subunit">
    <text evidence="2">Core subunit of respiratory chain NADH dehydrogenase (Complex I) which is composed of 45 different subunits.</text>
</comment>
<comment type="subcellular location">
    <subcellularLocation>
        <location evidence="2">Mitochondrion inner membrane</location>
        <topology evidence="3">Multi-pass membrane protein</topology>
    </subcellularLocation>
</comment>
<comment type="similarity">
    <text evidence="4">Belongs to the complex I subunit 1 family.</text>
</comment>
<organism>
    <name type="scientific">Perameles gunnii</name>
    <name type="common">Eastern barred bandicoot</name>
    <dbReference type="NCBI Taxonomy" id="37737"/>
    <lineage>
        <taxon>Eukaryota</taxon>
        <taxon>Metazoa</taxon>
        <taxon>Chordata</taxon>
        <taxon>Craniata</taxon>
        <taxon>Vertebrata</taxon>
        <taxon>Euteleostomi</taxon>
        <taxon>Mammalia</taxon>
        <taxon>Metatheria</taxon>
        <taxon>Peramelemorphia</taxon>
        <taxon>Peramelidae</taxon>
        <taxon>Perameles</taxon>
    </lineage>
</organism>
<protein>
    <recommendedName>
        <fullName>NADH-ubiquinone oxidoreductase chain 1</fullName>
        <ecNumber evidence="1">7.1.1.2</ecNumber>
    </recommendedName>
    <alternativeName>
        <fullName>NADH dehydrogenase subunit 1</fullName>
    </alternativeName>
</protein>
<sequence>MFIINLLLYIVPILLAVAFLTLIERKVLGYMQFRKGPNIVGPYGLLQPFADAVKLFTKEPLRPLTSSISMFIIAPILALTLALTIWVPLPMPYSLIDLNMGLLFILALSGLSVYSILWSGWASNSKYALIGALRAVAQTISYEVTLAIILLSIMLINGSFTLKTLITTQENMWLIVTTWPLAMMWYISTLAETNRAPFDLTEGESELVSGFNVEYAAGPFAMFFLAEYANIIVMNAMTTILFLGTSINQNFTHLNTLSFMMKTLTLTIVFLWIRASYPRFRYDQLMHLLWKNFLPITLACCLWFISMPIALSCIPPQI</sequence>
<feature type="chain" id="PRO_0000117450" description="NADH-ubiquinone oxidoreductase chain 1">
    <location>
        <begin position="1"/>
        <end position="318"/>
    </location>
</feature>
<feature type="transmembrane region" description="Helical" evidence="3">
    <location>
        <begin position="3"/>
        <end position="23"/>
    </location>
</feature>
<feature type="transmembrane region" description="Helical" evidence="3">
    <location>
        <begin position="68"/>
        <end position="88"/>
    </location>
</feature>
<feature type="transmembrane region" description="Helical" evidence="3">
    <location>
        <begin position="102"/>
        <end position="122"/>
    </location>
</feature>
<feature type="transmembrane region" description="Helical" evidence="3">
    <location>
        <begin position="146"/>
        <end position="166"/>
    </location>
</feature>
<feature type="transmembrane region" description="Helical" evidence="3">
    <location>
        <begin position="172"/>
        <end position="192"/>
    </location>
</feature>
<feature type="transmembrane region" description="Helical" evidence="3">
    <location>
        <begin position="223"/>
        <end position="243"/>
    </location>
</feature>
<feature type="transmembrane region" description="Helical" evidence="3">
    <location>
        <begin position="253"/>
        <end position="273"/>
    </location>
</feature>
<feature type="transmembrane region" description="Helical" evidence="3">
    <location>
        <begin position="294"/>
        <end position="314"/>
    </location>
</feature>
<dbReference type="EC" id="7.1.1.2" evidence="1"/>
<dbReference type="EMBL" id="AB011227">
    <property type="protein sequence ID" value="BAA32119.1"/>
    <property type="molecule type" value="Genomic_DNA"/>
</dbReference>
<dbReference type="SMR" id="O78710"/>
<dbReference type="GO" id="GO:0005743">
    <property type="term" value="C:mitochondrial inner membrane"/>
    <property type="evidence" value="ECO:0000250"/>
    <property type="project" value="UniProtKB"/>
</dbReference>
<dbReference type="GO" id="GO:0008137">
    <property type="term" value="F:NADH dehydrogenase (ubiquinone) activity"/>
    <property type="evidence" value="ECO:0000250"/>
    <property type="project" value="UniProtKB"/>
</dbReference>
<dbReference type="GO" id="GO:0006120">
    <property type="term" value="P:mitochondrial electron transport, NADH to ubiquinone"/>
    <property type="evidence" value="ECO:0000250"/>
    <property type="project" value="UniProtKB"/>
</dbReference>
<dbReference type="GO" id="GO:0032981">
    <property type="term" value="P:mitochondrial respiratory chain complex I assembly"/>
    <property type="evidence" value="ECO:0000250"/>
    <property type="project" value="UniProtKB"/>
</dbReference>
<dbReference type="HAMAP" id="MF_01350">
    <property type="entry name" value="NDH1_NuoH"/>
    <property type="match status" value="1"/>
</dbReference>
<dbReference type="InterPro" id="IPR001694">
    <property type="entry name" value="NADH_UbQ_OxRdtase_su1/FPO"/>
</dbReference>
<dbReference type="InterPro" id="IPR018086">
    <property type="entry name" value="NADH_UbQ_OxRdtase_su1_CS"/>
</dbReference>
<dbReference type="PANTHER" id="PTHR11432">
    <property type="entry name" value="NADH DEHYDROGENASE SUBUNIT 1"/>
    <property type="match status" value="1"/>
</dbReference>
<dbReference type="PANTHER" id="PTHR11432:SF3">
    <property type="entry name" value="NADH-UBIQUINONE OXIDOREDUCTASE CHAIN 1"/>
    <property type="match status" value="1"/>
</dbReference>
<dbReference type="Pfam" id="PF00146">
    <property type="entry name" value="NADHdh"/>
    <property type="match status" value="1"/>
</dbReference>
<dbReference type="PROSITE" id="PS00667">
    <property type="entry name" value="COMPLEX1_ND1_1"/>
    <property type="match status" value="1"/>
</dbReference>
<dbReference type="PROSITE" id="PS00668">
    <property type="entry name" value="COMPLEX1_ND1_2"/>
    <property type="match status" value="1"/>
</dbReference>
<keyword id="KW-0249">Electron transport</keyword>
<keyword id="KW-0472">Membrane</keyword>
<keyword id="KW-0496">Mitochondrion</keyword>
<keyword id="KW-0999">Mitochondrion inner membrane</keyword>
<keyword id="KW-0520">NAD</keyword>
<keyword id="KW-0679">Respiratory chain</keyword>
<keyword id="KW-1278">Translocase</keyword>
<keyword id="KW-0812">Transmembrane</keyword>
<keyword id="KW-1133">Transmembrane helix</keyword>
<keyword id="KW-0813">Transport</keyword>
<keyword id="KW-0830">Ubiquinone</keyword>